<sequence length="121" mass="13278">MKIVISKPDKNKLRQKRHRRIRGKLSGTADRPRLNIFRSNTGIYAQVIDDVAGVTLASASTLDKEVSKGTKTEQAIVVGKLVAERAVAKGISEVVFDRGGYLYHGRVKALADSARENGLKF</sequence>
<accession>Q5LXS7</accession>
<gene>
    <name evidence="1" type="primary">rplR</name>
    <name type="ordered locus">str1918</name>
</gene>
<dbReference type="EMBL" id="CP000024">
    <property type="protein sequence ID" value="AAV63431.1"/>
    <property type="molecule type" value="Genomic_DNA"/>
</dbReference>
<dbReference type="SMR" id="Q5LXS7"/>
<dbReference type="KEGG" id="stc:str1918"/>
<dbReference type="HOGENOM" id="CLU_098841_0_1_9"/>
<dbReference type="GO" id="GO:0022625">
    <property type="term" value="C:cytosolic large ribosomal subunit"/>
    <property type="evidence" value="ECO:0007669"/>
    <property type="project" value="TreeGrafter"/>
</dbReference>
<dbReference type="GO" id="GO:0008097">
    <property type="term" value="F:5S rRNA binding"/>
    <property type="evidence" value="ECO:0007669"/>
    <property type="project" value="TreeGrafter"/>
</dbReference>
<dbReference type="GO" id="GO:0003735">
    <property type="term" value="F:structural constituent of ribosome"/>
    <property type="evidence" value="ECO:0007669"/>
    <property type="project" value="InterPro"/>
</dbReference>
<dbReference type="GO" id="GO:0006412">
    <property type="term" value="P:translation"/>
    <property type="evidence" value="ECO:0007669"/>
    <property type="project" value="UniProtKB-UniRule"/>
</dbReference>
<dbReference type="CDD" id="cd00432">
    <property type="entry name" value="Ribosomal_L18_L5e"/>
    <property type="match status" value="1"/>
</dbReference>
<dbReference type="FunFam" id="3.30.420.100:FF:000001">
    <property type="entry name" value="50S ribosomal protein L18"/>
    <property type="match status" value="1"/>
</dbReference>
<dbReference type="Gene3D" id="3.30.420.100">
    <property type="match status" value="1"/>
</dbReference>
<dbReference type="HAMAP" id="MF_01337_B">
    <property type="entry name" value="Ribosomal_uL18_B"/>
    <property type="match status" value="1"/>
</dbReference>
<dbReference type="InterPro" id="IPR004389">
    <property type="entry name" value="Ribosomal_uL18_bac-type"/>
</dbReference>
<dbReference type="InterPro" id="IPR005484">
    <property type="entry name" value="Ribosomal_uL18_bac/euk"/>
</dbReference>
<dbReference type="NCBIfam" id="TIGR00060">
    <property type="entry name" value="L18_bact"/>
    <property type="match status" value="1"/>
</dbReference>
<dbReference type="PANTHER" id="PTHR12899">
    <property type="entry name" value="39S RIBOSOMAL PROTEIN L18, MITOCHONDRIAL"/>
    <property type="match status" value="1"/>
</dbReference>
<dbReference type="PANTHER" id="PTHR12899:SF3">
    <property type="entry name" value="LARGE RIBOSOMAL SUBUNIT PROTEIN UL18M"/>
    <property type="match status" value="1"/>
</dbReference>
<dbReference type="Pfam" id="PF00861">
    <property type="entry name" value="Ribosomal_L18p"/>
    <property type="match status" value="1"/>
</dbReference>
<dbReference type="SUPFAM" id="SSF53137">
    <property type="entry name" value="Translational machinery components"/>
    <property type="match status" value="1"/>
</dbReference>
<feature type="chain" id="PRO_0000131363" description="Large ribosomal subunit protein uL18">
    <location>
        <begin position="1"/>
        <end position="121"/>
    </location>
</feature>
<evidence type="ECO:0000255" key="1">
    <source>
        <dbReference type="HAMAP-Rule" id="MF_01337"/>
    </source>
</evidence>
<evidence type="ECO:0000305" key="2"/>
<keyword id="KW-0687">Ribonucleoprotein</keyword>
<keyword id="KW-0689">Ribosomal protein</keyword>
<keyword id="KW-0694">RNA-binding</keyword>
<keyword id="KW-0699">rRNA-binding</keyword>
<proteinExistence type="inferred from homology"/>
<reference key="1">
    <citation type="journal article" date="2004" name="Nat. Biotechnol.">
        <title>Complete sequence and comparative genome analysis of the dairy bacterium Streptococcus thermophilus.</title>
        <authorList>
            <person name="Bolotin A."/>
            <person name="Quinquis B."/>
            <person name="Renault P."/>
            <person name="Sorokin A."/>
            <person name="Ehrlich S.D."/>
            <person name="Kulakauskas S."/>
            <person name="Lapidus A."/>
            <person name="Goltsman E."/>
            <person name="Mazur M."/>
            <person name="Pusch G.D."/>
            <person name="Fonstein M."/>
            <person name="Overbeek R."/>
            <person name="Kyprides N."/>
            <person name="Purnelle B."/>
            <person name="Prozzi D."/>
            <person name="Ngui K."/>
            <person name="Masuy D."/>
            <person name="Hancy F."/>
            <person name="Burteau S."/>
            <person name="Boutry M."/>
            <person name="Delcour J."/>
            <person name="Goffeau A."/>
            <person name="Hols P."/>
        </authorList>
    </citation>
    <scope>NUCLEOTIDE SEQUENCE [LARGE SCALE GENOMIC DNA]</scope>
    <source>
        <strain>CNRZ 1066</strain>
    </source>
</reference>
<protein>
    <recommendedName>
        <fullName evidence="1">Large ribosomal subunit protein uL18</fullName>
    </recommendedName>
    <alternativeName>
        <fullName evidence="2">50S ribosomal protein L18</fullName>
    </alternativeName>
</protein>
<name>RL18_STRT1</name>
<comment type="function">
    <text evidence="1">This is one of the proteins that bind and probably mediate the attachment of the 5S RNA into the large ribosomal subunit, where it forms part of the central protuberance.</text>
</comment>
<comment type="subunit">
    <text evidence="1">Part of the 50S ribosomal subunit; part of the 5S rRNA/L5/L18/L25 subcomplex. Contacts the 5S and 23S rRNAs.</text>
</comment>
<comment type="similarity">
    <text evidence="1">Belongs to the universal ribosomal protein uL18 family.</text>
</comment>
<organism>
    <name type="scientific">Streptococcus thermophilus (strain CNRZ 1066)</name>
    <dbReference type="NCBI Taxonomy" id="299768"/>
    <lineage>
        <taxon>Bacteria</taxon>
        <taxon>Bacillati</taxon>
        <taxon>Bacillota</taxon>
        <taxon>Bacilli</taxon>
        <taxon>Lactobacillales</taxon>
        <taxon>Streptococcaceae</taxon>
        <taxon>Streptococcus</taxon>
    </lineage>
</organism>